<name>PHNW_SALHS</name>
<sequence length="367" mass="40337">MTSRNYLLLTPGPLTTSRTVKEAMLFDSCTWDDDYNIGVVEQIRQQLTELATASEGYTSVLLQGSGSYAVEAVLGSALGPQDKVLIVSNGAYGARMVEMAGLMGIAHHAYDCGEVARPDVQAIDAILNADPTISHIAMVHSETTTGMLNPIDEVGALAHRYGKTYIVDAMSSFGGIPMDIAALHIDYLISSANKCIQGVPGFAFVIAREQKLAACKGHSRSLSLDLYAQWRCMEDNHGKWRFTSPTHTVLAFAQALKELAKEGGVAARHQRYQQNQRSLVAGMRALGFNTLLDDELHSPIITAFYSPEDPQYRFSEFYRRLKEQGFVIYPGKVSQSDCFRIGNIGEVYAADITALLTAIRTAMYWMK</sequence>
<organism>
    <name type="scientific">Salmonella heidelberg (strain SL476)</name>
    <dbReference type="NCBI Taxonomy" id="454169"/>
    <lineage>
        <taxon>Bacteria</taxon>
        <taxon>Pseudomonadati</taxon>
        <taxon>Pseudomonadota</taxon>
        <taxon>Gammaproteobacteria</taxon>
        <taxon>Enterobacterales</taxon>
        <taxon>Enterobacteriaceae</taxon>
        <taxon>Salmonella</taxon>
    </lineage>
</organism>
<protein>
    <recommendedName>
        <fullName evidence="1">2-aminoethylphosphonate--pyruvate transaminase</fullName>
        <ecNumber evidence="1">2.6.1.37</ecNumber>
    </recommendedName>
    <alternativeName>
        <fullName evidence="1">2-aminoethylphosphonate aminotransferase</fullName>
    </alternativeName>
    <alternativeName>
        <fullName evidence="1">AEP transaminase</fullName>
        <shortName evidence="1">AEPT</shortName>
    </alternativeName>
</protein>
<gene>
    <name evidence="1" type="primary">phnW</name>
    <name type="ordered locus">SeHA_C0533</name>
</gene>
<feature type="chain" id="PRO_1000144858" description="2-aminoethylphosphonate--pyruvate transaminase">
    <location>
        <begin position="1"/>
        <end position="367"/>
    </location>
</feature>
<feature type="modified residue" description="N6-(pyridoxal phosphate)lysine" evidence="1">
    <location>
        <position position="194"/>
    </location>
</feature>
<dbReference type="EC" id="2.6.1.37" evidence="1"/>
<dbReference type="EMBL" id="CP001120">
    <property type="protein sequence ID" value="ACF66903.1"/>
    <property type="molecule type" value="Genomic_DNA"/>
</dbReference>
<dbReference type="RefSeq" id="WP_000203968.1">
    <property type="nucleotide sequence ID" value="NC_011083.1"/>
</dbReference>
<dbReference type="SMR" id="B4T9C6"/>
<dbReference type="KEGG" id="seh:SeHA_C0533"/>
<dbReference type="HOGENOM" id="CLU_027686_3_1_6"/>
<dbReference type="Proteomes" id="UP000001866">
    <property type="component" value="Chromosome"/>
</dbReference>
<dbReference type="GO" id="GO:0047304">
    <property type="term" value="F:2-aminoethylphosphonate-pyruvate transaminase activity"/>
    <property type="evidence" value="ECO:0007669"/>
    <property type="project" value="UniProtKB-UniRule"/>
</dbReference>
<dbReference type="GO" id="GO:0019700">
    <property type="term" value="P:organic phosphonate catabolic process"/>
    <property type="evidence" value="ECO:0007669"/>
    <property type="project" value="InterPro"/>
</dbReference>
<dbReference type="Gene3D" id="3.90.1150.10">
    <property type="entry name" value="Aspartate Aminotransferase, domain 1"/>
    <property type="match status" value="1"/>
</dbReference>
<dbReference type="Gene3D" id="3.40.640.10">
    <property type="entry name" value="Type I PLP-dependent aspartate aminotransferase-like (Major domain)"/>
    <property type="match status" value="1"/>
</dbReference>
<dbReference type="HAMAP" id="MF_01376">
    <property type="entry name" value="PhnW_aminotrans_5"/>
    <property type="match status" value="1"/>
</dbReference>
<dbReference type="InterPro" id="IPR000192">
    <property type="entry name" value="Aminotrans_V_dom"/>
</dbReference>
<dbReference type="InterPro" id="IPR012703">
    <property type="entry name" value="NH2EtPonate_pyrv_transaminase"/>
</dbReference>
<dbReference type="InterPro" id="IPR015424">
    <property type="entry name" value="PyrdxlP-dep_Trfase"/>
</dbReference>
<dbReference type="InterPro" id="IPR015421">
    <property type="entry name" value="PyrdxlP-dep_Trfase_major"/>
</dbReference>
<dbReference type="InterPro" id="IPR015422">
    <property type="entry name" value="PyrdxlP-dep_Trfase_small"/>
</dbReference>
<dbReference type="InterPro" id="IPR024169">
    <property type="entry name" value="SP_NH2Trfase/AEP_transaminase"/>
</dbReference>
<dbReference type="NCBIfam" id="TIGR03301">
    <property type="entry name" value="PhnW-AepZ"/>
    <property type="match status" value="1"/>
</dbReference>
<dbReference type="NCBIfam" id="NF010006">
    <property type="entry name" value="PRK13479.1"/>
    <property type="match status" value="1"/>
</dbReference>
<dbReference type="NCBIfam" id="TIGR02326">
    <property type="entry name" value="transamin_PhnW"/>
    <property type="match status" value="1"/>
</dbReference>
<dbReference type="PANTHER" id="PTHR42778">
    <property type="entry name" value="2-AMINOETHYLPHOSPHONATE--PYRUVATE TRANSAMINASE"/>
    <property type="match status" value="1"/>
</dbReference>
<dbReference type="PANTHER" id="PTHR42778:SF1">
    <property type="entry name" value="2-AMINOETHYLPHOSPHONATE--PYRUVATE TRANSAMINASE"/>
    <property type="match status" value="1"/>
</dbReference>
<dbReference type="Pfam" id="PF00266">
    <property type="entry name" value="Aminotran_5"/>
    <property type="match status" value="1"/>
</dbReference>
<dbReference type="PIRSF" id="PIRSF000524">
    <property type="entry name" value="SPT"/>
    <property type="match status" value="1"/>
</dbReference>
<dbReference type="SUPFAM" id="SSF53383">
    <property type="entry name" value="PLP-dependent transferases"/>
    <property type="match status" value="1"/>
</dbReference>
<proteinExistence type="inferred from homology"/>
<evidence type="ECO:0000255" key="1">
    <source>
        <dbReference type="HAMAP-Rule" id="MF_01376"/>
    </source>
</evidence>
<keyword id="KW-0032">Aminotransferase</keyword>
<keyword id="KW-0663">Pyridoxal phosphate</keyword>
<keyword id="KW-0670">Pyruvate</keyword>
<keyword id="KW-0808">Transferase</keyword>
<accession>B4T9C6</accession>
<comment type="function">
    <text evidence="1">Involved in phosphonate degradation.</text>
</comment>
<comment type="catalytic activity">
    <reaction evidence="1">
        <text>(2-aminoethyl)phosphonate + pyruvate = phosphonoacetaldehyde + L-alanine</text>
        <dbReference type="Rhea" id="RHEA:17021"/>
        <dbReference type="ChEBI" id="CHEBI:15361"/>
        <dbReference type="ChEBI" id="CHEBI:57418"/>
        <dbReference type="ChEBI" id="CHEBI:57972"/>
        <dbReference type="ChEBI" id="CHEBI:58383"/>
        <dbReference type="EC" id="2.6.1.37"/>
    </reaction>
</comment>
<comment type="cofactor">
    <cofactor evidence="1">
        <name>pyridoxal 5'-phosphate</name>
        <dbReference type="ChEBI" id="CHEBI:597326"/>
    </cofactor>
</comment>
<comment type="subunit">
    <text evidence="1">Homodimer.</text>
</comment>
<comment type="similarity">
    <text evidence="1">Belongs to the class-V pyridoxal-phosphate-dependent aminotransferase family. PhnW subfamily.</text>
</comment>
<reference key="1">
    <citation type="journal article" date="2011" name="J. Bacteriol.">
        <title>Comparative genomics of 28 Salmonella enterica isolates: evidence for CRISPR-mediated adaptive sublineage evolution.</title>
        <authorList>
            <person name="Fricke W.F."/>
            <person name="Mammel M.K."/>
            <person name="McDermott P.F."/>
            <person name="Tartera C."/>
            <person name="White D.G."/>
            <person name="Leclerc J.E."/>
            <person name="Ravel J."/>
            <person name="Cebula T.A."/>
        </authorList>
    </citation>
    <scope>NUCLEOTIDE SEQUENCE [LARGE SCALE GENOMIC DNA]</scope>
    <source>
        <strain>SL476</strain>
    </source>
</reference>